<accession>Q562D6</accession>
<accession>Q3U5H3</accession>
<accession>Q8BRJ8</accession>
<accession>Q9D3F5</accession>
<feature type="chain" id="PRO_0000288887" description="tRNA (adenine(37)-N6)-methyltransferase">
    <location>
        <begin position="1"/>
        <end position="431"/>
    </location>
</feature>
<feature type="domain" description="TsaA-like" evidence="4">
    <location>
        <begin position="30"/>
        <end position="168"/>
    </location>
</feature>
<feature type="region of interest" description="Disordered" evidence="5">
    <location>
        <begin position="196"/>
        <end position="242"/>
    </location>
</feature>
<feature type="compositionally biased region" description="Basic and acidic residues" evidence="5">
    <location>
        <begin position="207"/>
        <end position="242"/>
    </location>
</feature>
<feature type="binding site" evidence="1">
    <location>
        <begin position="47"/>
        <end position="49"/>
    </location>
    <ligand>
        <name>S-adenosyl-L-methionine</name>
        <dbReference type="ChEBI" id="CHEBI:59789"/>
    </ligand>
</feature>
<feature type="binding site" evidence="1">
    <location>
        <begin position="90"/>
        <end position="91"/>
    </location>
    <ligand>
        <name>S-adenosyl-L-methionine</name>
        <dbReference type="ChEBI" id="CHEBI:59789"/>
    </ligand>
</feature>
<feature type="binding site" evidence="1">
    <location>
        <position position="117"/>
    </location>
    <ligand>
        <name>S-adenosyl-L-methionine</name>
        <dbReference type="ChEBI" id="CHEBI:59789"/>
    </ligand>
</feature>
<feature type="binding site" evidence="1">
    <location>
        <position position="127"/>
    </location>
    <ligand>
        <name>S-adenosyl-L-methionine</name>
        <dbReference type="ChEBI" id="CHEBI:59789"/>
    </ligand>
</feature>
<feature type="binding site" evidence="1">
    <location>
        <begin position="148"/>
        <end position="151"/>
    </location>
    <ligand>
        <name>S-adenosyl-L-methionine</name>
        <dbReference type="ChEBI" id="CHEBI:59789"/>
    </ligand>
</feature>
<feature type="splice variant" id="VSP_025815" description="In isoform 3." evidence="6">
    <original>MRGLEKQGSCATAAPCGCVQPALEA</original>
    <variation>MWVRSAGPG</variation>
    <location>
        <begin position="1"/>
        <end position="25"/>
    </location>
</feature>
<feature type="splice variant" id="VSP_025816" description="In isoform 2." evidence="6">
    <original>VADPEESLAALGS</original>
    <variation>TVLPPSPSPNGREEQSSVEEEVQQRAGPSRRAAPRAASMLLTPQSSSLATSALTHWAISLPPLPQGLVFS</variation>
    <location>
        <begin position="419"/>
        <end position="431"/>
    </location>
</feature>
<feature type="sequence conflict" description="In Ref. 3; AAH92543." evidence="7" ref="3">
    <original>A</original>
    <variation>V</variation>
    <location>
        <position position="22"/>
    </location>
</feature>
<comment type="function">
    <text evidence="2 3">S-adenosyl-L-methionine-dependent methyltransferase responsible for the addition of the methyl group in the formation of N6-methyl-N6-threonylcarbamoyladenosine at position 37 (m(6)t(6)A37) of the tRNA anticodon loop of tRNA(Ser)(GCU). The methyl group of m(6)t(6)A37 may improve the efficiency of the tRNA decoding ability. May bind to tRNA.</text>
</comment>
<comment type="catalytic activity">
    <reaction evidence="3">
        <text>N(6)-L-threonylcarbamoyladenosine(37) in tRNA + S-adenosyl-L-methionine = N(6)-methyl,N(6)-L-threonylcarbamoyladenosine(37) in tRNA + S-adenosyl-L-homocysteine + H(+)</text>
        <dbReference type="Rhea" id="RHEA:70027"/>
        <dbReference type="Rhea" id="RHEA-COMP:10163"/>
        <dbReference type="Rhea" id="RHEA-COMP:17808"/>
        <dbReference type="ChEBI" id="CHEBI:15378"/>
        <dbReference type="ChEBI" id="CHEBI:57856"/>
        <dbReference type="ChEBI" id="CHEBI:59789"/>
        <dbReference type="ChEBI" id="CHEBI:74418"/>
        <dbReference type="ChEBI" id="CHEBI:188470"/>
    </reaction>
    <physiologicalReaction direction="left-to-right" evidence="3">
        <dbReference type="Rhea" id="RHEA:70028"/>
    </physiologicalReaction>
</comment>
<comment type="alternative products">
    <event type="alternative splicing"/>
    <isoform>
        <id>Q562D6-1</id>
        <name>1</name>
        <sequence type="displayed"/>
    </isoform>
    <isoform>
        <id>Q562D6-2</id>
        <name>2</name>
        <sequence type="described" ref="VSP_025816"/>
    </isoform>
    <isoform>
        <id>Q562D6-3</id>
        <name>3</name>
        <sequence type="described" ref="VSP_025815"/>
    </isoform>
</comment>
<comment type="miscellaneous">
    <molecule>Isoform 3</molecule>
    <text evidence="7">May be produced at very low levels due to a premature stop codon in the mRNA, leading to nonsense-mediated mRNA decay.</text>
</comment>
<comment type="similarity">
    <text evidence="7">Belongs to the tRNA methyltransferase O family.</text>
</comment>
<keyword id="KW-0025">Alternative splicing</keyword>
<keyword id="KW-0489">Methyltransferase</keyword>
<keyword id="KW-1185">Reference proteome</keyword>
<keyword id="KW-0694">RNA-binding</keyword>
<keyword id="KW-0949">S-adenosyl-L-methionine</keyword>
<keyword id="KW-0808">Transferase</keyword>
<keyword id="KW-0819">tRNA processing</keyword>
<sequence>MRGLEKQGSCATAAPCGCVQPALEAGNLLTEPIGYLESCFPAKIGTPRQPSICSHSRACLKIRKNIFNNPEHSLMGLEEFSHVWILFVFHKNGHLNYKAKVQPPRLNGAKTGVFSTRSPHRPNAIGLTLAKLEKVEGGAVYLSGVDMIDGTPVLDIKPYIADYDSPQNLSVHNDHHKLRAEAQVDGTANSCDQLLLSGRGKVQPRQSTKERPKCLEDRTSGENSQKSRDMSEIQHTLPEDRERALDLALEPSRGESMDMPENQLGPPELKSFLEEGTDRPRKVEGALVLPGSSAETQWDASYRARTADRVPYSVVPSWVTEAPVAPLQVRFTPHAEMDLRKLNSGDASQPSFKYFHSAEEAKRAIEAVLSADPRSVYRRKLCEDRLFFFTVDTAHVTCWFGDGFAEVVRIKLASESVQVADPEESLAALGS</sequence>
<name>TRMO_MOUSE</name>
<dbReference type="EC" id="2.1.1.-" evidence="3"/>
<dbReference type="EMBL" id="AK017931">
    <property type="protein sequence ID" value="BAB31009.1"/>
    <property type="molecule type" value="mRNA"/>
</dbReference>
<dbReference type="EMBL" id="AK044073">
    <property type="protein sequence ID" value="BAC31763.1"/>
    <property type="molecule type" value="mRNA"/>
</dbReference>
<dbReference type="EMBL" id="AK153576">
    <property type="protein sequence ID" value="BAE32105.1"/>
    <property type="molecule type" value="mRNA"/>
</dbReference>
<dbReference type="EMBL" id="AL806523">
    <property type="status" value="NOT_ANNOTATED_CDS"/>
    <property type="molecule type" value="Genomic_DNA"/>
</dbReference>
<dbReference type="EMBL" id="BC092543">
    <property type="protein sequence ID" value="AAH92543.1"/>
    <property type="molecule type" value="mRNA"/>
</dbReference>
<dbReference type="CCDS" id="CCDS18148.1">
    <molecule id="Q562D6-2"/>
</dbReference>
<dbReference type="CCDS" id="CCDS84727.1">
    <molecule id="Q562D6-1"/>
</dbReference>
<dbReference type="RefSeq" id="NP_001334024.1">
    <molecule id="Q562D6-1"/>
    <property type="nucleotide sequence ID" value="NM_001347095.1"/>
</dbReference>
<dbReference type="RefSeq" id="NP_083362.1">
    <molecule id="Q562D6-2"/>
    <property type="nucleotide sequence ID" value="NM_029086.2"/>
</dbReference>
<dbReference type="BioGRID" id="216996">
    <property type="interactions" value="1"/>
</dbReference>
<dbReference type="FunCoup" id="Q562D6">
    <property type="interactions" value="103"/>
</dbReference>
<dbReference type="IntAct" id="Q562D6">
    <property type="interactions" value="1"/>
</dbReference>
<dbReference type="MINT" id="Q562D6"/>
<dbReference type="STRING" id="10090.ENSMUSP00000083752"/>
<dbReference type="iPTMnet" id="Q562D6"/>
<dbReference type="PhosphoSitePlus" id="Q562D6"/>
<dbReference type="PaxDb" id="10090-ENSMUSP00000083752"/>
<dbReference type="ProteomicsDB" id="298131">
    <molecule id="Q562D6-1"/>
</dbReference>
<dbReference type="ProteomicsDB" id="298132">
    <molecule id="Q562D6-2"/>
</dbReference>
<dbReference type="ProteomicsDB" id="298133">
    <molecule id="Q562D6-3"/>
</dbReference>
<dbReference type="Antibodypedia" id="28898">
    <property type="antibodies" value="162 antibodies from 26 providers"/>
</dbReference>
<dbReference type="Ensembl" id="ENSMUST00000030015.6">
    <molecule id="Q562D6-1"/>
    <property type="protein sequence ID" value="ENSMUSP00000030015.6"/>
    <property type="gene ID" value="ENSMUSG00000028331.13"/>
</dbReference>
<dbReference type="Ensembl" id="ENSMUST00000086563.11">
    <molecule id="Q562D6-2"/>
    <property type="protein sequence ID" value="ENSMUSP00000083752.5"/>
    <property type="gene ID" value="ENSMUSG00000028331.13"/>
</dbReference>
<dbReference type="GeneID" id="74753"/>
<dbReference type="KEGG" id="mmu:74753"/>
<dbReference type="UCSC" id="uc008stp.1">
    <molecule id="Q562D6-2"/>
    <property type="organism name" value="mouse"/>
</dbReference>
<dbReference type="UCSC" id="uc008stq.1">
    <molecule id="Q562D6-1"/>
    <property type="organism name" value="mouse"/>
</dbReference>
<dbReference type="AGR" id="MGI:1922003"/>
<dbReference type="CTD" id="51531"/>
<dbReference type="MGI" id="MGI:1922003">
    <property type="gene designation" value="Trmo"/>
</dbReference>
<dbReference type="VEuPathDB" id="HostDB:ENSMUSG00000028331"/>
<dbReference type="eggNOG" id="KOG2942">
    <property type="taxonomic scope" value="Eukaryota"/>
</dbReference>
<dbReference type="GeneTree" id="ENSGT00390000004643"/>
<dbReference type="HOGENOM" id="CLU_013458_1_0_1"/>
<dbReference type="InParanoid" id="Q562D6"/>
<dbReference type="OMA" id="IDMIQGT"/>
<dbReference type="OrthoDB" id="73923at9989"/>
<dbReference type="TreeFam" id="TF331670"/>
<dbReference type="BioGRID-ORCS" id="74753">
    <property type="hits" value="3 hits in 44 CRISPR screens"/>
</dbReference>
<dbReference type="PRO" id="PR:Q562D6"/>
<dbReference type="Proteomes" id="UP000000589">
    <property type="component" value="Chromosome 4"/>
</dbReference>
<dbReference type="RNAct" id="Q562D6">
    <property type="molecule type" value="protein"/>
</dbReference>
<dbReference type="Bgee" id="ENSMUSG00000028331">
    <property type="expression patterns" value="Expressed in spermatocyte and 157 other cell types or tissues"/>
</dbReference>
<dbReference type="ExpressionAtlas" id="Q562D6">
    <property type="expression patterns" value="baseline and differential"/>
</dbReference>
<dbReference type="GO" id="GO:0003723">
    <property type="term" value="F:RNA binding"/>
    <property type="evidence" value="ECO:0007669"/>
    <property type="project" value="UniProtKB-KW"/>
</dbReference>
<dbReference type="GO" id="GO:0089715">
    <property type="term" value="F:tRNA (L-threonylcarbamoyladenosine(37)-C2) methyltransferase activity"/>
    <property type="evidence" value="ECO:0000250"/>
    <property type="project" value="UniProtKB"/>
</dbReference>
<dbReference type="GO" id="GO:0030488">
    <property type="term" value="P:tRNA methylation"/>
    <property type="evidence" value="ECO:0000250"/>
    <property type="project" value="UniProtKB"/>
</dbReference>
<dbReference type="CDD" id="cd09281">
    <property type="entry name" value="UPF0066"/>
    <property type="match status" value="1"/>
</dbReference>
<dbReference type="FunFam" id="2.40.30.70:FF:000002">
    <property type="entry name" value="tRNA (Adenine(37)-N6)-methyltransferase isoform X1"/>
    <property type="match status" value="1"/>
</dbReference>
<dbReference type="FunFam" id="3.30.2310.10:FF:000002">
    <property type="entry name" value="tRNA methyltransferase O"/>
    <property type="match status" value="1"/>
</dbReference>
<dbReference type="Gene3D" id="2.40.30.70">
    <property type="entry name" value="YaeB-like"/>
    <property type="match status" value="1"/>
</dbReference>
<dbReference type="Gene3D" id="3.30.2310.10">
    <property type="entry name" value="YaeB-like"/>
    <property type="match status" value="1"/>
</dbReference>
<dbReference type="InterPro" id="IPR023370">
    <property type="entry name" value="TrmO-like_N"/>
</dbReference>
<dbReference type="InterPro" id="IPR023368">
    <property type="entry name" value="UPF0066_cons_site"/>
</dbReference>
<dbReference type="InterPro" id="IPR040372">
    <property type="entry name" value="YaeB-like"/>
</dbReference>
<dbReference type="InterPro" id="IPR036413">
    <property type="entry name" value="YaeB-like_sf"/>
</dbReference>
<dbReference type="InterPro" id="IPR036414">
    <property type="entry name" value="YaeB_N_sf"/>
</dbReference>
<dbReference type="NCBIfam" id="TIGR00104">
    <property type="entry name" value="tRNA_TsaA"/>
    <property type="match status" value="1"/>
</dbReference>
<dbReference type="PANTHER" id="PTHR12818">
    <property type="entry name" value="TRNA (ADENINE(37)-N6)-METHYLTRANSFERASE"/>
    <property type="match status" value="1"/>
</dbReference>
<dbReference type="PANTHER" id="PTHR12818:SF0">
    <property type="entry name" value="TRNA (ADENINE(37)-N6)-METHYLTRANSFERASE"/>
    <property type="match status" value="1"/>
</dbReference>
<dbReference type="Pfam" id="PF01980">
    <property type="entry name" value="TrmO_N"/>
    <property type="match status" value="1"/>
</dbReference>
<dbReference type="SUPFAM" id="SSF118196">
    <property type="entry name" value="YaeB-like"/>
    <property type="match status" value="2"/>
</dbReference>
<dbReference type="PROSITE" id="PS01318">
    <property type="entry name" value="TSAA_1"/>
    <property type="match status" value="1"/>
</dbReference>
<dbReference type="PROSITE" id="PS51668">
    <property type="entry name" value="TSAA_2"/>
    <property type="match status" value="1"/>
</dbReference>
<gene>
    <name evidence="8" type="primary">Trmo</name>
</gene>
<reference key="1">
    <citation type="journal article" date="2005" name="Science">
        <title>The transcriptional landscape of the mammalian genome.</title>
        <authorList>
            <person name="Carninci P."/>
            <person name="Kasukawa T."/>
            <person name="Katayama S."/>
            <person name="Gough J."/>
            <person name="Frith M.C."/>
            <person name="Maeda N."/>
            <person name="Oyama R."/>
            <person name="Ravasi T."/>
            <person name="Lenhard B."/>
            <person name="Wells C."/>
            <person name="Kodzius R."/>
            <person name="Shimokawa K."/>
            <person name="Bajic V.B."/>
            <person name="Brenner S.E."/>
            <person name="Batalov S."/>
            <person name="Forrest A.R."/>
            <person name="Zavolan M."/>
            <person name="Davis M.J."/>
            <person name="Wilming L.G."/>
            <person name="Aidinis V."/>
            <person name="Allen J.E."/>
            <person name="Ambesi-Impiombato A."/>
            <person name="Apweiler R."/>
            <person name="Aturaliya R.N."/>
            <person name="Bailey T.L."/>
            <person name="Bansal M."/>
            <person name="Baxter L."/>
            <person name="Beisel K.W."/>
            <person name="Bersano T."/>
            <person name="Bono H."/>
            <person name="Chalk A.M."/>
            <person name="Chiu K.P."/>
            <person name="Choudhary V."/>
            <person name="Christoffels A."/>
            <person name="Clutterbuck D.R."/>
            <person name="Crowe M.L."/>
            <person name="Dalla E."/>
            <person name="Dalrymple B.P."/>
            <person name="de Bono B."/>
            <person name="Della Gatta G."/>
            <person name="di Bernardo D."/>
            <person name="Down T."/>
            <person name="Engstrom P."/>
            <person name="Fagiolini M."/>
            <person name="Faulkner G."/>
            <person name="Fletcher C.F."/>
            <person name="Fukushima T."/>
            <person name="Furuno M."/>
            <person name="Futaki S."/>
            <person name="Gariboldi M."/>
            <person name="Georgii-Hemming P."/>
            <person name="Gingeras T.R."/>
            <person name="Gojobori T."/>
            <person name="Green R.E."/>
            <person name="Gustincich S."/>
            <person name="Harbers M."/>
            <person name="Hayashi Y."/>
            <person name="Hensch T.K."/>
            <person name="Hirokawa N."/>
            <person name="Hill D."/>
            <person name="Huminiecki L."/>
            <person name="Iacono M."/>
            <person name="Ikeo K."/>
            <person name="Iwama A."/>
            <person name="Ishikawa T."/>
            <person name="Jakt M."/>
            <person name="Kanapin A."/>
            <person name="Katoh M."/>
            <person name="Kawasawa Y."/>
            <person name="Kelso J."/>
            <person name="Kitamura H."/>
            <person name="Kitano H."/>
            <person name="Kollias G."/>
            <person name="Krishnan S.P."/>
            <person name="Kruger A."/>
            <person name="Kummerfeld S.K."/>
            <person name="Kurochkin I.V."/>
            <person name="Lareau L.F."/>
            <person name="Lazarevic D."/>
            <person name="Lipovich L."/>
            <person name="Liu J."/>
            <person name="Liuni S."/>
            <person name="McWilliam S."/>
            <person name="Madan Babu M."/>
            <person name="Madera M."/>
            <person name="Marchionni L."/>
            <person name="Matsuda H."/>
            <person name="Matsuzawa S."/>
            <person name="Miki H."/>
            <person name="Mignone F."/>
            <person name="Miyake S."/>
            <person name="Morris K."/>
            <person name="Mottagui-Tabar S."/>
            <person name="Mulder N."/>
            <person name="Nakano N."/>
            <person name="Nakauchi H."/>
            <person name="Ng P."/>
            <person name="Nilsson R."/>
            <person name="Nishiguchi S."/>
            <person name="Nishikawa S."/>
            <person name="Nori F."/>
            <person name="Ohara O."/>
            <person name="Okazaki Y."/>
            <person name="Orlando V."/>
            <person name="Pang K.C."/>
            <person name="Pavan W.J."/>
            <person name="Pavesi G."/>
            <person name="Pesole G."/>
            <person name="Petrovsky N."/>
            <person name="Piazza S."/>
            <person name="Reed J."/>
            <person name="Reid J.F."/>
            <person name="Ring B.Z."/>
            <person name="Ringwald M."/>
            <person name="Rost B."/>
            <person name="Ruan Y."/>
            <person name="Salzberg S.L."/>
            <person name="Sandelin A."/>
            <person name="Schneider C."/>
            <person name="Schoenbach C."/>
            <person name="Sekiguchi K."/>
            <person name="Semple C.A."/>
            <person name="Seno S."/>
            <person name="Sessa L."/>
            <person name="Sheng Y."/>
            <person name="Shibata Y."/>
            <person name="Shimada H."/>
            <person name="Shimada K."/>
            <person name="Silva D."/>
            <person name="Sinclair B."/>
            <person name="Sperling S."/>
            <person name="Stupka E."/>
            <person name="Sugiura K."/>
            <person name="Sultana R."/>
            <person name="Takenaka Y."/>
            <person name="Taki K."/>
            <person name="Tammoja K."/>
            <person name="Tan S.L."/>
            <person name="Tang S."/>
            <person name="Taylor M.S."/>
            <person name="Tegner J."/>
            <person name="Teichmann S.A."/>
            <person name="Ueda H.R."/>
            <person name="van Nimwegen E."/>
            <person name="Verardo R."/>
            <person name="Wei C.L."/>
            <person name="Yagi K."/>
            <person name="Yamanishi H."/>
            <person name="Zabarovsky E."/>
            <person name="Zhu S."/>
            <person name="Zimmer A."/>
            <person name="Hide W."/>
            <person name="Bult C."/>
            <person name="Grimmond S.M."/>
            <person name="Teasdale R.D."/>
            <person name="Liu E.T."/>
            <person name="Brusic V."/>
            <person name="Quackenbush J."/>
            <person name="Wahlestedt C."/>
            <person name="Mattick J.S."/>
            <person name="Hume D.A."/>
            <person name="Kai C."/>
            <person name="Sasaki D."/>
            <person name="Tomaru Y."/>
            <person name="Fukuda S."/>
            <person name="Kanamori-Katayama M."/>
            <person name="Suzuki M."/>
            <person name="Aoki J."/>
            <person name="Arakawa T."/>
            <person name="Iida J."/>
            <person name="Imamura K."/>
            <person name="Itoh M."/>
            <person name="Kato T."/>
            <person name="Kawaji H."/>
            <person name="Kawagashira N."/>
            <person name="Kawashima T."/>
            <person name="Kojima M."/>
            <person name="Kondo S."/>
            <person name="Konno H."/>
            <person name="Nakano K."/>
            <person name="Ninomiya N."/>
            <person name="Nishio T."/>
            <person name="Okada M."/>
            <person name="Plessy C."/>
            <person name="Shibata K."/>
            <person name="Shiraki T."/>
            <person name="Suzuki S."/>
            <person name="Tagami M."/>
            <person name="Waki K."/>
            <person name="Watahiki A."/>
            <person name="Okamura-Oho Y."/>
            <person name="Suzuki H."/>
            <person name="Kawai J."/>
            <person name="Hayashizaki Y."/>
        </authorList>
    </citation>
    <scope>NUCLEOTIDE SEQUENCE [LARGE SCALE MRNA] (ISOFORMS 1; 2 AND 3)</scope>
    <source>
        <strain>C57BL/6J</strain>
        <tissue>Brain cortex</tissue>
        <tissue>Thymus</tissue>
    </source>
</reference>
<reference key="2">
    <citation type="journal article" date="2009" name="PLoS Biol.">
        <title>Lineage-specific biology revealed by a finished genome assembly of the mouse.</title>
        <authorList>
            <person name="Church D.M."/>
            <person name="Goodstadt L."/>
            <person name="Hillier L.W."/>
            <person name="Zody M.C."/>
            <person name="Goldstein S."/>
            <person name="She X."/>
            <person name="Bult C.J."/>
            <person name="Agarwala R."/>
            <person name="Cherry J.L."/>
            <person name="DiCuccio M."/>
            <person name="Hlavina W."/>
            <person name="Kapustin Y."/>
            <person name="Meric P."/>
            <person name="Maglott D."/>
            <person name="Birtle Z."/>
            <person name="Marques A.C."/>
            <person name="Graves T."/>
            <person name="Zhou S."/>
            <person name="Teague B."/>
            <person name="Potamousis K."/>
            <person name="Churas C."/>
            <person name="Place M."/>
            <person name="Herschleb J."/>
            <person name="Runnheim R."/>
            <person name="Forrest D."/>
            <person name="Amos-Landgraf J."/>
            <person name="Schwartz D.C."/>
            <person name="Cheng Z."/>
            <person name="Lindblad-Toh K."/>
            <person name="Eichler E.E."/>
            <person name="Ponting C.P."/>
        </authorList>
    </citation>
    <scope>NUCLEOTIDE SEQUENCE [LARGE SCALE GENOMIC DNA]</scope>
    <source>
        <strain>C57BL/6J</strain>
    </source>
</reference>
<reference key="3">
    <citation type="journal article" date="2004" name="Genome Res.">
        <title>The status, quality, and expansion of the NIH full-length cDNA project: the Mammalian Gene Collection (MGC).</title>
        <authorList>
            <consortium name="The MGC Project Team"/>
        </authorList>
    </citation>
    <scope>NUCLEOTIDE SEQUENCE [LARGE SCALE MRNA] (ISOFORM 1)</scope>
    <source>
        <tissue>Kidney</tissue>
    </source>
</reference>
<evidence type="ECO:0000250" key="1">
    <source>
        <dbReference type="UniProtKB" id="O29998"/>
    </source>
</evidence>
<evidence type="ECO:0000250" key="2">
    <source>
        <dbReference type="UniProtKB" id="P28634"/>
    </source>
</evidence>
<evidence type="ECO:0000250" key="3">
    <source>
        <dbReference type="UniProtKB" id="Q9BU70"/>
    </source>
</evidence>
<evidence type="ECO:0000255" key="4">
    <source>
        <dbReference type="PROSITE-ProRule" id="PRU01003"/>
    </source>
</evidence>
<evidence type="ECO:0000256" key="5">
    <source>
        <dbReference type="SAM" id="MobiDB-lite"/>
    </source>
</evidence>
<evidence type="ECO:0000303" key="6">
    <source>
    </source>
</evidence>
<evidence type="ECO:0000305" key="7"/>
<evidence type="ECO:0000312" key="8">
    <source>
        <dbReference type="MGI" id="MGI:1922003"/>
    </source>
</evidence>
<protein>
    <recommendedName>
        <fullName>tRNA (adenine(37)-N6)-methyltransferase</fullName>
        <ecNumber evidence="3">2.1.1.-</ecNumber>
    </recommendedName>
    <alternativeName>
        <fullName evidence="8">tRNA methyltransferase O</fullName>
    </alternativeName>
</protein>
<proteinExistence type="evidence at transcript level"/>
<organism>
    <name type="scientific">Mus musculus</name>
    <name type="common">Mouse</name>
    <dbReference type="NCBI Taxonomy" id="10090"/>
    <lineage>
        <taxon>Eukaryota</taxon>
        <taxon>Metazoa</taxon>
        <taxon>Chordata</taxon>
        <taxon>Craniata</taxon>
        <taxon>Vertebrata</taxon>
        <taxon>Euteleostomi</taxon>
        <taxon>Mammalia</taxon>
        <taxon>Eutheria</taxon>
        <taxon>Euarchontoglires</taxon>
        <taxon>Glires</taxon>
        <taxon>Rodentia</taxon>
        <taxon>Myomorpha</taxon>
        <taxon>Muroidea</taxon>
        <taxon>Muridae</taxon>
        <taxon>Murinae</taxon>
        <taxon>Mus</taxon>
        <taxon>Mus</taxon>
    </lineage>
</organism>